<feature type="chain" id="PRO_0000258085" description="Leucyl/phenylalanyl-tRNA--protein transferase">
    <location>
        <begin position="1"/>
        <end position="204"/>
    </location>
</feature>
<protein>
    <recommendedName>
        <fullName evidence="1">Leucyl/phenylalanyl-tRNA--protein transferase</fullName>
        <ecNumber evidence="1">2.3.2.6</ecNumber>
    </recommendedName>
    <alternativeName>
        <fullName evidence="1">L/F-transferase</fullName>
    </alternativeName>
    <alternativeName>
        <fullName evidence="1">Leucyltransferase</fullName>
    </alternativeName>
    <alternativeName>
        <fullName evidence="1">Phenyalanyltransferase</fullName>
    </alternativeName>
</protein>
<dbReference type="EC" id="2.3.2.6" evidence="1"/>
<dbReference type="EMBL" id="CP000133">
    <property type="protein sequence ID" value="ABC90659.1"/>
    <property type="molecule type" value="Genomic_DNA"/>
</dbReference>
<dbReference type="RefSeq" id="WP_011425155.1">
    <property type="nucleotide sequence ID" value="NC_007761.1"/>
</dbReference>
<dbReference type="SMR" id="Q2K927"/>
<dbReference type="KEGG" id="ret:RHE_CH01868"/>
<dbReference type="eggNOG" id="COG2360">
    <property type="taxonomic scope" value="Bacteria"/>
</dbReference>
<dbReference type="HOGENOM" id="CLU_075045_1_1_5"/>
<dbReference type="OrthoDB" id="9790282at2"/>
<dbReference type="Proteomes" id="UP000001936">
    <property type="component" value="Chromosome"/>
</dbReference>
<dbReference type="GO" id="GO:0005737">
    <property type="term" value="C:cytoplasm"/>
    <property type="evidence" value="ECO:0007669"/>
    <property type="project" value="UniProtKB-SubCell"/>
</dbReference>
<dbReference type="GO" id="GO:0008914">
    <property type="term" value="F:leucyl-tRNA--protein transferase activity"/>
    <property type="evidence" value="ECO:0007669"/>
    <property type="project" value="UniProtKB-UniRule"/>
</dbReference>
<dbReference type="GO" id="GO:0030163">
    <property type="term" value="P:protein catabolic process"/>
    <property type="evidence" value="ECO:0007669"/>
    <property type="project" value="UniProtKB-UniRule"/>
</dbReference>
<dbReference type="FunFam" id="3.40.630.70:FF:000001">
    <property type="entry name" value="Leucyl/phenylalanyl-tRNA--protein transferase"/>
    <property type="match status" value="1"/>
</dbReference>
<dbReference type="Gene3D" id="3.40.630.70">
    <property type="entry name" value="Leucyl/phenylalanyl-tRNA-protein transferase, C-terminal domain"/>
    <property type="match status" value="1"/>
</dbReference>
<dbReference type="HAMAP" id="MF_00688">
    <property type="entry name" value="Leu_Phe_trans"/>
    <property type="match status" value="1"/>
</dbReference>
<dbReference type="InterPro" id="IPR016181">
    <property type="entry name" value="Acyl_CoA_acyltransferase"/>
</dbReference>
<dbReference type="InterPro" id="IPR004616">
    <property type="entry name" value="Leu/Phe-tRNA_Trfase"/>
</dbReference>
<dbReference type="InterPro" id="IPR042203">
    <property type="entry name" value="Leu/Phe-tRNA_Trfase_C"/>
</dbReference>
<dbReference type="NCBIfam" id="TIGR00667">
    <property type="entry name" value="aat"/>
    <property type="match status" value="1"/>
</dbReference>
<dbReference type="PANTHER" id="PTHR30098">
    <property type="entry name" value="LEUCYL/PHENYLALANYL-TRNA--PROTEIN TRANSFERASE"/>
    <property type="match status" value="1"/>
</dbReference>
<dbReference type="PANTHER" id="PTHR30098:SF2">
    <property type="entry name" value="LEUCYL_PHENYLALANYL-TRNA--PROTEIN TRANSFERASE"/>
    <property type="match status" value="1"/>
</dbReference>
<dbReference type="Pfam" id="PF03588">
    <property type="entry name" value="Leu_Phe_trans"/>
    <property type="match status" value="1"/>
</dbReference>
<dbReference type="SUPFAM" id="SSF55729">
    <property type="entry name" value="Acyl-CoA N-acyltransferases (Nat)"/>
    <property type="match status" value="1"/>
</dbReference>
<gene>
    <name evidence="1" type="primary">aat</name>
    <name type="ordered locus">RHE_CH01868</name>
</gene>
<accession>Q2K927</accession>
<organism>
    <name type="scientific">Rhizobium etli (strain ATCC 51251 / DSM 11541 / JCM 21823 / NBRC 15573 / CFN 42)</name>
    <dbReference type="NCBI Taxonomy" id="347834"/>
    <lineage>
        <taxon>Bacteria</taxon>
        <taxon>Pseudomonadati</taxon>
        <taxon>Pseudomonadota</taxon>
        <taxon>Alphaproteobacteria</taxon>
        <taxon>Hyphomicrobiales</taxon>
        <taxon>Rhizobiaceae</taxon>
        <taxon>Rhizobium/Agrobacterium group</taxon>
        <taxon>Rhizobium</taxon>
    </lineage>
</organism>
<proteinExistence type="inferred from homology"/>
<comment type="function">
    <text evidence="1">Functions in the N-end rule pathway of protein degradation where it conjugates Leu, Phe and, less efficiently, Met from aminoacyl-tRNAs to the N-termini of proteins containing an N-terminal arginine or lysine.</text>
</comment>
<comment type="catalytic activity">
    <reaction evidence="1">
        <text>N-terminal L-lysyl-[protein] + L-leucyl-tRNA(Leu) = N-terminal L-leucyl-L-lysyl-[protein] + tRNA(Leu) + H(+)</text>
        <dbReference type="Rhea" id="RHEA:12340"/>
        <dbReference type="Rhea" id="RHEA-COMP:9613"/>
        <dbReference type="Rhea" id="RHEA-COMP:9622"/>
        <dbReference type="Rhea" id="RHEA-COMP:12670"/>
        <dbReference type="Rhea" id="RHEA-COMP:12671"/>
        <dbReference type="ChEBI" id="CHEBI:15378"/>
        <dbReference type="ChEBI" id="CHEBI:65249"/>
        <dbReference type="ChEBI" id="CHEBI:78442"/>
        <dbReference type="ChEBI" id="CHEBI:78494"/>
        <dbReference type="ChEBI" id="CHEBI:133043"/>
        <dbReference type="EC" id="2.3.2.6"/>
    </reaction>
</comment>
<comment type="catalytic activity">
    <reaction evidence="1">
        <text>N-terminal L-arginyl-[protein] + L-leucyl-tRNA(Leu) = N-terminal L-leucyl-L-arginyl-[protein] + tRNA(Leu) + H(+)</text>
        <dbReference type="Rhea" id="RHEA:50416"/>
        <dbReference type="Rhea" id="RHEA-COMP:9613"/>
        <dbReference type="Rhea" id="RHEA-COMP:9622"/>
        <dbReference type="Rhea" id="RHEA-COMP:12672"/>
        <dbReference type="Rhea" id="RHEA-COMP:12673"/>
        <dbReference type="ChEBI" id="CHEBI:15378"/>
        <dbReference type="ChEBI" id="CHEBI:64719"/>
        <dbReference type="ChEBI" id="CHEBI:78442"/>
        <dbReference type="ChEBI" id="CHEBI:78494"/>
        <dbReference type="ChEBI" id="CHEBI:133044"/>
        <dbReference type="EC" id="2.3.2.6"/>
    </reaction>
</comment>
<comment type="catalytic activity">
    <reaction evidence="1">
        <text>L-phenylalanyl-tRNA(Phe) + an N-terminal L-alpha-aminoacyl-[protein] = an N-terminal L-phenylalanyl-L-alpha-aminoacyl-[protein] + tRNA(Phe)</text>
        <dbReference type="Rhea" id="RHEA:43632"/>
        <dbReference type="Rhea" id="RHEA-COMP:9668"/>
        <dbReference type="Rhea" id="RHEA-COMP:9699"/>
        <dbReference type="Rhea" id="RHEA-COMP:10636"/>
        <dbReference type="Rhea" id="RHEA-COMP:10637"/>
        <dbReference type="ChEBI" id="CHEBI:78442"/>
        <dbReference type="ChEBI" id="CHEBI:78531"/>
        <dbReference type="ChEBI" id="CHEBI:78597"/>
        <dbReference type="ChEBI" id="CHEBI:83561"/>
        <dbReference type="EC" id="2.3.2.6"/>
    </reaction>
</comment>
<comment type="subcellular location">
    <subcellularLocation>
        <location evidence="1">Cytoplasm</location>
    </subcellularLocation>
</comment>
<comment type="similarity">
    <text evidence="1">Belongs to the L/F-transferase family.</text>
</comment>
<name>LFTR_RHIEC</name>
<reference key="1">
    <citation type="journal article" date="2006" name="Proc. Natl. Acad. Sci. U.S.A.">
        <title>The partitioned Rhizobium etli genome: genetic and metabolic redundancy in seven interacting replicons.</title>
        <authorList>
            <person name="Gonzalez V."/>
            <person name="Santamaria R.I."/>
            <person name="Bustos P."/>
            <person name="Hernandez-Gonzalez I."/>
            <person name="Medrano-Soto A."/>
            <person name="Moreno-Hagelsieb G."/>
            <person name="Janga S.C."/>
            <person name="Ramirez M.A."/>
            <person name="Jimenez-Jacinto V."/>
            <person name="Collado-Vides J."/>
            <person name="Davila G."/>
        </authorList>
    </citation>
    <scope>NUCLEOTIDE SEQUENCE [LARGE SCALE GENOMIC DNA]</scope>
    <source>
        <strain>ATCC 51251 / DSM 11541 / JCM 21823 / NBRC 15573 / CFN 42</strain>
    </source>
</reference>
<sequence length="204" mass="22939">MAGPRRKSPGITPDILLRAYSIGLFPMAESADDPEIFWVEPELRGVLPLDNFHISKSLAKRVRRRPFEIRFDHDFEQVIAACAEETSGRPSTWINQTIRSLYATLFEIGHAHTVEAWDGDELVGGLYGVSLGSAFFGESMFSRRTDASKICLVHLVERLREKGFTLLDTQFTTEHLKTFGAIDVPKAEYALLLAVAMESPHLKF</sequence>
<keyword id="KW-0012">Acyltransferase</keyword>
<keyword id="KW-0963">Cytoplasm</keyword>
<keyword id="KW-1185">Reference proteome</keyword>
<keyword id="KW-0808">Transferase</keyword>
<evidence type="ECO:0000255" key="1">
    <source>
        <dbReference type="HAMAP-Rule" id="MF_00688"/>
    </source>
</evidence>